<comment type="function">
    <text evidence="3">Ubiquitin-like protein that can be covalently attached to proteins as a monomer or as a lysine-linked polymer. Regulates the life cycle of promyelocytic leukemia nuclear bodies (PML-NBs). PolySUMO1P1/SUMO5 conjugation on 'Lys-160' of PML facilitates recruitment of PML-NB components, which enlarges PML-NB. SUMO1P1/SUMO5 also increases polySUMO2/3 conjugation of PML, resulting in RNF4-mediated disruption of PML-NBs.</text>
</comment>
<comment type="subunit">
    <text evidence="3">Interacts with CBX4 (PubMed:27211601). Interacts with PIAS1 (PubMed:27211601). Found in a complex with SAE2 (PubMed:27211601). Interacts with UBE2I (PubMed:27211601). Interacts with SP100 (PubMed:27211601). Interacts with HIPK2 (PubMed:27211601). Interacts with DAXX (PubMed:27211601). Interacts with PML-RARA oncoprotein; PML-RARalpha outcompetes PML for SUMO1P1/SUMO5 conjugation (PubMed:27211601).</text>
</comment>
<comment type="interaction">
    <interactant intactId="EBI-10175576">
        <id>G2XKQ0</id>
    </interactant>
    <interactant intactId="EBI-742108">
        <id>Q96B23</id>
        <label>ARK2N</label>
    </interactant>
    <organismsDiffer>false</organismsDiffer>
    <experiments>3</experiments>
</comment>
<comment type="interaction">
    <interactant intactId="EBI-10175576">
        <id>G2XKQ0</id>
    </interactant>
    <interactant intactId="EBI-16429430">
        <id>A0A0S2Z4M1</id>
        <label>AXIN1</label>
    </interactant>
    <organismsDiffer>false</organismsDiffer>
    <experiments>3</experiments>
</comment>
<comment type="interaction">
    <interactant intactId="EBI-10175576">
        <id>G2XKQ0</id>
    </interactant>
    <interactant intactId="EBI-710484">
        <id>O15169</id>
        <label>AXIN1</label>
    </interactant>
    <organismsDiffer>false</organismsDiffer>
    <experiments>3</experiments>
</comment>
<comment type="interaction">
    <interactant intactId="EBI-10175576">
        <id>G2XKQ0</id>
    </interactant>
    <interactant intactId="EBI-456371">
        <id>P61024</id>
        <label>CKS1B</label>
    </interactant>
    <organismsDiffer>false</organismsDiffer>
    <experiments>3</experiments>
</comment>
<comment type="interaction">
    <interactant intactId="EBI-10175576">
        <id>G2XKQ0</id>
    </interactant>
    <interactant intactId="EBI-2949647">
        <id>Q8WWZ3</id>
        <label>EDARADD</label>
    </interactant>
    <organismsDiffer>false</organismsDiffer>
    <experiments>5</experiments>
</comment>
<comment type="interaction">
    <interactant intactId="EBI-10175576">
        <id>G2XKQ0</id>
    </interactant>
    <interactant intactId="EBI-2834260">
        <id>P62508</id>
        <label>ESRRG</label>
    </interactant>
    <organismsDiffer>false</organismsDiffer>
    <experiments>3</experiments>
</comment>
<comment type="interaction">
    <interactant intactId="EBI-10175576">
        <id>G2XKQ0</id>
    </interactant>
    <interactant intactId="EBI-726822">
        <id>Q9BPY3</id>
        <label>FAM118B</label>
    </interactant>
    <organismsDiffer>false</organismsDiffer>
    <experiments>3</experiments>
</comment>
<comment type="interaction">
    <interactant intactId="EBI-10175576">
        <id>G2XKQ0</id>
    </interactant>
    <interactant intactId="EBI-2799179">
        <id>Q8TCP9</id>
        <label>FAM200A</label>
    </interactant>
    <organismsDiffer>false</organismsDiffer>
    <experiments>3</experiments>
</comment>
<comment type="interaction">
    <interactant intactId="EBI-10175576">
        <id>G2XKQ0</id>
    </interactant>
    <interactant intactId="EBI-744771">
        <id>O75344</id>
        <label>FKBP6</label>
    </interactant>
    <organismsDiffer>false</organismsDiffer>
    <experiments>6</experiments>
</comment>
<comment type="interaction">
    <interactant intactId="EBI-10175576">
        <id>G2XKQ0</id>
    </interactant>
    <interactant intactId="EBI-10172181">
        <id>Q53SE7</id>
        <label>FLJ13057</label>
    </interactant>
    <organismsDiffer>false</organismsDiffer>
    <experiments>3</experiments>
</comment>
<comment type="interaction">
    <interactant intactId="EBI-10175576">
        <id>G2XKQ0</id>
    </interactant>
    <interactant intactId="EBI-357966">
        <id>P07910</id>
        <label>HNRNPC</label>
    </interactant>
    <organismsDiffer>false</organismsDiffer>
    <experiments>3</experiments>
</comment>
<comment type="interaction">
    <interactant intactId="EBI-10175576">
        <id>G2XKQ0</id>
    </interactant>
    <interactant intactId="EBI-1044640">
        <id>Q9BYQ4</id>
        <label>KRTAP9-2</label>
    </interactant>
    <organismsDiffer>false</organismsDiffer>
    <experiments>3</experiments>
</comment>
<comment type="interaction">
    <interactant intactId="EBI-10175576">
        <id>G2XKQ0</id>
    </interactant>
    <interactant intactId="EBI-2686809">
        <id>Q96JM7</id>
        <label>L3MBTL3</label>
    </interactant>
    <organismsDiffer>false</organismsDiffer>
    <experiments>3</experiments>
</comment>
<comment type="interaction">
    <interactant intactId="EBI-10175576">
        <id>G2XKQ0</id>
    </interactant>
    <interactant intactId="EBI-10246607">
        <id>Q5TA79</id>
        <label>LCE2A</label>
    </interactant>
    <organismsDiffer>false</organismsDiffer>
    <experiments>3</experiments>
</comment>
<comment type="interaction">
    <interactant intactId="EBI-10175576">
        <id>G2XKQ0</id>
    </interactant>
    <interactant intactId="EBI-10246750">
        <id>Q5TA82</id>
        <label>LCE2D</label>
    </interactant>
    <organismsDiffer>false</organismsDiffer>
    <experiments>3</experiments>
</comment>
<comment type="interaction">
    <interactant intactId="EBI-10175576">
        <id>G2XKQ0</id>
    </interactant>
    <interactant intactId="EBI-741424">
        <id>Q8NDC0</id>
        <label>MAPK1IP1L</label>
    </interactant>
    <organismsDiffer>false</organismsDiffer>
    <experiments>3</experiments>
</comment>
<comment type="interaction">
    <interactant intactId="EBI-10175576">
        <id>G2XKQ0</id>
    </interactant>
    <interactant intactId="EBI-8641936">
        <id>Q15742</id>
        <label>NAB2</label>
    </interactant>
    <organismsDiffer>false</organismsDiffer>
    <experiments>3</experiments>
</comment>
<comment type="interaction">
    <interactant intactId="EBI-10175576">
        <id>G2XKQ0</id>
    </interactant>
    <interactant intactId="EBI-348555">
        <id>O75928</id>
        <label>PIAS2</label>
    </interactant>
    <organismsDiffer>false</organismsDiffer>
    <experiments>3</experiments>
</comment>
<comment type="interaction">
    <interactant intactId="EBI-10175576">
        <id>G2XKQ0</id>
    </interactant>
    <interactant intactId="EBI-743747">
        <id>Q01826</id>
        <label>SATB1</label>
    </interactant>
    <organismsDiffer>false</organismsDiffer>
    <experiments>3</experiments>
</comment>
<comment type="interaction">
    <interactant intactId="EBI-10175576">
        <id>G2XKQ0</id>
    </interactant>
    <interactant intactId="EBI-2548259">
        <id>Q9Y6X0</id>
        <label>SETBP1</label>
    </interactant>
    <organismsDiffer>false</organismsDiffer>
    <experiments>3</experiments>
</comment>
<comment type="interaction">
    <interactant intactId="EBI-10175576">
        <id>G2XKQ0</id>
    </interactant>
    <interactant intactId="EBI-3505701">
        <id>P35711</id>
        <label>SOX5</label>
    </interactant>
    <organismsDiffer>false</organismsDiffer>
    <experiments>3</experiments>
</comment>
<comment type="interaction">
    <interactant intactId="EBI-10175576">
        <id>G2XKQ0</id>
    </interactant>
    <interactant intactId="EBI-80140">
        <id>P63165</id>
        <label>SUMO1</label>
    </interactant>
    <organismsDiffer>false</organismsDiffer>
    <experiments>3</experiments>
</comment>
<comment type="interaction">
    <interactant intactId="EBI-10175576">
        <id>G2XKQ0</id>
    </interactant>
    <interactant intactId="EBI-355744">
        <id>Q12933</id>
        <label>TRAF2</label>
    </interactant>
    <organismsDiffer>false</organismsDiffer>
    <experiments>3</experiments>
</comment>
<comment type="interaction">
    <interactant intactId="EBI-10175576">
        <id>G2XKQ0</id>
    </interactant>
    <interactant intactId="EBI-740098">
        <id>P36406</id>
        <label>TRIM23</label>
    </interactant>
    <organismsDiffer>false</organismsDiffer>
    <experiments>3</experiments>
</comment>
<comment type="interaction">
    <interactant intactId="EBI-10175576">
        <id>G2XKQ0</id>
    </interactant>
    <interactant intactId="EBI-718569">
        <id>Q9UBT2</id>
        <label>UBA2</label>
    </interactant>
    <organismsDiffer>false</organismsDiffer>
    <experiments>3</experiments>
</comment>
<comment type="interaction">
    <interactant intactId="EBI-10175576">
        <id>G2XKQ0</id>
    </interactant>
    <interactant intactId="EBI-80168">
        <id>P63279</id>
        <label>UBE2I</label>
    </interactant>
    <organismsDiffer>false</organismsDiffer>
    <experiments>3</experiments>
</comment>
<comment type="interaction">
    <interactant intactId="EBI-10175576">
        <id>G2XKQ0</id>
    </interactant>
    <interactant intactId="EBI-10180829">
        <id>Q7KZS0</id>
        <label>UBE2I</label>
    </interactant>
    <organismsDiffer>false</organismsDiffer>
    <experiments>3</experiments>
</comment>
<comment type="interaction">
    <interactant intactId="EBI-10175576">
        <id>G2XKQ0</id>
    </interactant>
    <interactant intactId="EBI-3918996">
        <id>Q9HCK0</id>
        <label>ZBTB26</label>
    </interactant>
    <organismsDiffer>false</organismsDiffer>
    <experiments>3</experiments>
</comment>
<comment type="interaction">
    <interactant intactId="EBI-10175576">
        <id>G2XKQ0</id>
    </interactant>
    <interactant intactId="EBI-7227791">
        <id>Q15916</id>
        <label>ZBTB6</label>
    </interactant>
    <organismsDiffer>false</organismsDiffer>
    <experiments>3</experiments>
</comment>
<comment type="interaction">
    <interactant intactId="EBI-10175576">
        <id>G2XKQ0</id>
    </interactant>
    <interactant intactId="EBI-741415">
        <id>O60232</id>
        <label>ZNRD2</label>
    </interactant>
    <organismsDiffer>false</organismsDiffer>
    <experiments>3</experiments>
</comment>
<comment type="interaction">
    <interactant intactId="EBI-10175576">
        <id>G2XKQ0</id>
    </interactant>
    <interactant intactId="EBI-10175581">
        <id>B2R8Y4</id>
    </interactant>
    <organismsDiffer>false</organismsDiffer>
    <experiments>3</experiments>
</comment>
<comment type="interaction">
    <interactant intactId="EBI-10175576">
        <id>G2XKQ0</id>
    </interactant>
    <interactant intactId="EBI-10243413">
        <id>Q59GP6</id>
    </interactant>
    <organismsDiffer>false</organismsDiffer>
    <experiments>3</experiments>
</comment>
<comment type="subcellular location">
    <subcellularLocation>
        <location evidence="3">Nucleus</location>
    </subcellularLocation>
    <text evidence="3">Forms prominent non-membrane-bound structures in the nucleus.</text>
</comment>
<comment type="tissue specificity">
    <text evidence="3">High expression levels in testes and peripheral blood leukocyte (PubMed:27211601). Expressed also in lung, placenta, liver, spleen and thymus (PubMed:27211601).</text>
</comment>
<comment type="PTM">
    <text evidence="1">Cleavage of precursor form is necessary for function.</text>
</comment>
<comment type="PTM">
    <text evidence="3">Autosumoylated at Lys-18.</text>
</comment>
<comment type="miscellaneous">
    <text evidence="3">Highly conserved among primate species, however is not detected in mice.</text>
</comment>
<comment type="similarity">
    <text evidence="5">Belongs to the ubiquitin family. SUMO subfamily.</text>
</comment>
<comment type="caution">
    <text evidence="3">Defined as a pseudogene by HGNC. However the existence of the functional protein is supported by the inhibition of its expression and its function using siRNAs specifically targeting SUMO1P1/SUMO5.</text>
</comment>
<gene>
    <name evidence="6" type="primary">SUMO1P1</name>
    <name evidence="4" type="synonym">SUMO5</name>
    <name evidence="6" type="synonym">UBL2</name>
    <name evidence="6" type="synonym">UBL6</name>
</gene>
<organism>
    <name type="scientific">Homo sapiens</name>
    <name type="common">Human</name>
    <dbReference type="NCBI Taxonomy" id="9606"/>
    <lineage>
        <taxon>Eukaryota</taxon>
        <taxon>Metazoa</taxon>
        <taxon>Chordata</taxon>
        <taxon>Craniata</taxon>
        <taxon>Vertebrata</taxon>
        <taxon>Euteleostomi</taxon>
        <taxon>Mammalia</taxon>
        <taxon>Eutheria</taxon>
        <taxon>Euarchontoglires</taxon>
        <taxon>Primates</taxon>
        <taxon>Haplorrhini</taxon>
        <taxon>Catarrhini</taxon>
        <taxon>Hominidae</taxon>
        <taxon>Homo</taxon>
    </lineage>
</organism>
<sequence>MSDLEAKPSTEHLGDKIKDEDIKLRVIGQDSSEIHFKVKMTTPLKKLKKSYCQRQGVPVNSLRFLFEGQRIADNHTPEELGMEEEDVIEVYQEQIGGHSTV</sequence>
<feature type="chain" id="PRO_0000445393" description="Small ubiquitin-related modifier 5">
    <location>
        <begin position="1"/>
        <end position="101"/>
    </location>
</feature>
<feature type="propeptide" id="PRO_0000445394" evidence="1">
    <location>
        <begin position="98"/>
        <end position="101"/>
    </location>
</feature>
<feature type="domain" description="Ubiquitin-like" evidence="2">
    <location>
        <begin position="20"/>
        <end position="97"/>
    </location>
</feature>
<feature type="short sequence motif" description="Required for PML-NB formation" evidence="3">
    <location>
        <begin position="17"/>
        <end position="21"/>
    </location>
</feature>
<feature type="cross-link" description="Glycyl lysine isopeptide (Lys-Gly) (interchain with G-Cter in SUMO1P1/SUMO5)" evidence="3">
    <location>
        <position position="18"/>
    </location>
</feature>
<feature type="cross-link" description="Glycyl lysine isopeptide (Gly-Lys) (interchain with K-? in acceptor proteins)" evidence="2">
    <location>
        <position position="97"/>
    </location>
</feature>
<feature type="mutagenesis site" description="Does not affect nuclear bodies formation." evidence="3">
    <original>H</original>
    <variation>D</variation>
    <location>
        <position position="12"/>
    </location>
</feature>
<feature type="mutagenesis site" description="Unable to form nuclear bodies." evidence="3">
    <original>IKDED</original>
    <variation>KEGEY</variation>
    <location>
        <begin position="17"/>
        <end position="21"/>
    </location>
</feature>
<feature type="mutagenesis site" description="Unable to form nuclear bodies." evidence="3">
    <original>K</original>
    <variation>R</variation>
    <location>
        <position position="18"/>
    </location>
</feature>
<feature type="mutagenesis site" description="Does not affect nuclear bodies formatiom." evidence="3">
    <original>I</original>
    <variation>T</variation>
    <location>
        <position position="95"/>
    </location>
</feature>
<feature type="mutagenesis site" description="Lost the ability to conjugate UBE2I. Unable to form nuclear bodies." evidence="3">
    <original>GG</original>
    <variation>AA</variation>
    <location>
        <begin position="96"/>
        <end position="97"/>
    </location>
</feature>
<feature type="sequence conflict" description="In Ref. 1; ACM86836." evidence="5" ref="1">
    <original>P</original>
    <variation>L</variation>
    <location>
        <position position="8"/>
    </location>
</feature>
<dbReference type="EMBL" id="FJ042790">
    <property type="protein sequence ID" value="ACM86836.1"/>
    <property type="molecule type" value="mRNA"/>
</dbReference>
<dbReference type="EMBL" id="AC005220">
    <property type="status" value="NOT_ANNOTATED_CDS"/>
    <property type="molecule type" value="Genomic_DNA"/>
</dbReference>
<dbReference type="PDB" id="6IAM">
    <property type="method" value="X-ray"/>
    <property type="resolution" value="1.51 A"/>
    <property type="chains" value="C=5-8"/>
</dbReference>
<dbReference type="PDBsum" id="6IAM"/>
<dbReference type="SMR" id="G2XKQ0"/>
<dbReference type="FunCoup" id="G2XKQ0">
    <property type="interactions" value="520"/>
</dbReference>
<dbReference type="IntAct" id="G2XKQ0">
    <property type="interactions" value="43"/>
</dbReference>
<dbReference type="iPTMnet" id="G2XKQ0"/>
<dbReference type="PhosphoSitePlus" id="G2XKQ0"/>
<dbReference type="jPOST" id="G2XKQ0"/>
<dbReference type="MassIVE" id="G2XKQ0"/>
<dbReference type="Pumba" id="G2XKQ0"/>
<dbReference type="AGR" id="HGNC:33148"/>
<dbReference type="GeneCards" id="SUMO1P1"/>
<dbReference type="HGNC" id="HGNC:33148">
    <property type="gene designation" value="SUMO1P1"/>
</dbReference>
<dbReference type="neXtProt" id="NX_G2XKQ0"/>
<dbReference type="InParanoid" id="G2XKQ0"/>
<dbReference type="PAN-GO" id="G2XKQ0">
    <property type="GO annotations" value="5 GO annotations based on evolutionary models"/>
</dbReference>
<dbReference type="PathwayCommons" id="G2XKQ0"/>
<dbReference type="SignaLink" id="G2XKQ0"/>
<dbReference type="CD-CODE" id="B5B9A610">
    <property type="entry name" value="PML body"/>
</dbReference>
<dbReference type="Pharos" id="G2XKQ0">
    <property type="development level" value="Tbio"/>
</dbReference>
<dbReference type="Proteomes" id="UP000005640">
    <property type="component" value="Unplaced"/>
</dbReference>
<dbReference type="GO" id="GO:0005634">
    <property type="term" value="C:nucleus"/>
    <property type="evidence" value="ECO:0000314"/>
    <property type="project" value="UniProtKB"/>
</dbReference>
<dbReference type="GO" id="GO:0042802">
    <property type="term" value="F:identical protein binding"/>
    <property type="evidence" value="ECO:0000353"/>
    <property type="project" value="UniProtKB"/>
</dbReference>
<dbReference type="GO" id="GO:0031386">
    <property type="term" value="F:protein tag activity"/>
    <property type="evidence" value="ECO:0000318"/>
    <property type="project" value="GO_Central"/>
</dbReference>
<dbReference type="GO" id="GO:0008134">
    <property type="term" value="F:transcription factor binding"/>
    <property type="evidence" value="ECO:0000250"/>
    <property type="project" value="AgBase"/>
</dbReference>
<dbReference type="GO" id="GO:0044389">
    <property type="term" value="F:ubiquitin-like protein ligase binding"/>
    <property type="evidence" value="ECO:0000318"/>
    <property type="project" value="GO_Central"/>
</dbReference>
<dbReference type="GO" id="GO:0030578">
    <property type="term" value="P:PML body organization"/>
    <property type="evidence" value="ECO:0000315"/>
    <property type="project" value="UniProtKB"/>
</dbReference>
<dbReference type="GO" id="GO:0016925">
    <property type="term" value="P:protein sumoylation"/>
    <property type="evidence" value="ECO:0000314"/>
    <property type="project" value="UniProtKB"/>
</dbReference>
<dbReference type="CDD" id="cd16114">
    <property type="entry name" value="Ubl_SUMO1"/>
    <property type="match status" value="1"/>
</dbReference>
<dbReference type="FunFam" id="3.10.20.90:FF:000190">
    <property type="entry name" value="Small ubiquitin-related modifier"/>
    <property type="match status" value="1"/>
</dbReference>
<dbReference type="Gene3D" id="3.10.20.90">
    <property type="entry name" value="Phosphatidylinositol 3-kinase Catalytic Subunit, Chain A, domain 1"/>
    <property type="match status" value="1"/>
</dbReference>
<dbReference type="InterPro" id="IPR022617">
    <property type="entry name" value="Rad60/SUMO-like_dom"/>
</dbReference>
<dbReference type="InterPro" id="IPR046332">
    <property type="entry name" value="SUMO1_Ubl"/>
</dbReference>
<dbReference type="InterPro" id="IPR000626">
    <property type="entry name" value="Ubiquitin-like_dom"/>
</dbReference>
<dbReference type="InterPro" id="IPR029071">
    <property type="entry name" value="Ubiquitin-like_domsf"/>
</dbReference>
<dbReference type="PANTHER" id="PTHR10562">
    <property type="entry name" value="SMALL UBIQUITIN-RELATED MODIFIER"/>
    <property type="match status" value="1"/>
</dbReference>
<dbReference type="Pfam" id="PF11976">
    <property type="entry name" value="Rad60-SLD"/>
    <property type="match status" value="1"/>
</dbReference>
<dbReference type="SMART" id="SM00213">
    <property type="entry name" value="UBQ"/>
    <property type="match status" value="1"/>
</dbReference>
<dbReference type="SUPFAM" id="SSF54236">
    <property type="entry name" value="Ubiquitin-like"/>
    <property type="match status" value="1"/>
</dbReference>
<dbReference type="PROSITE" id="PS50053">
    <property type="entry name" value="UBIQUITIN_2"/>
    <property type="match status" value="1"/>
</dbReference>
<keyword id="KW-0002">3D-structure</keyword>
<keyword id="KW-1017">Isopeptide bond</keyword>
<keyword id="KW-0539">Nucleus</keyword>
<keyword id="KW-1185">Reference proteome</keyword>
<keyword id="KW-0832">Ubl conjugation</keyword>
<keyword id="KW-0833">Ubl conjugation pathway</keyword>
<proteinExistence type="evidence at protein level"/>
<accession>G2XKQ0</accession>
<protein>
    <recommendedName>
        <fullName evidence="4">Small ubiquitin-related modifier 5</fullName>
        <shortName>SUMO-5</shortName>
    </recommendedName>
    <alternativeName>
        <fullName evidence="6">SUMO1 pseudogene 1</fullName>
    </alternativeName>
    <alternativeName>
        <fullName evidence="6">Ubiquitin-like 2</fullName>
    </alternativeName>
    <alternativeName>
        <fullName evidence="6">Ubiquitin-like 6</fullName>
    </alternativeName>
</protein>
<reference key="1">
    <citation type="journal article" date="2016" name="Sci. Rep.">
        <title>SUMO5, a novel poly-sumo isoform, regulates pml nuclear bodies.</title>
        <authorList>
            <person name="Liang Y.C."/>
            <person name="Lee C.C."/>
            <person name="Yao Y.L."/>
            <person name="Lai C.C."/>
            <person name="Schmitz M.L."/>
            <person name="Yang W.M."/>
        </authorList>
    </citation>
    <scope>NUCLEOTIDE SEQUENCE [MRNA]</scope>
    <scope>SUBCELLULAR LOCATION</scope>
    <scope>TISSUE SPECIFICITY</scope>
    <scope>SUMOYLATION AT LYS-18</scope>
    <scope>MUTAGENESIS OF HIS-12; 17-ILE--ASP-21; LYS-18; ILE-95 AND 96-GLY-GLY-97</scope>
    <scope>SUBUNIT</scope>
    <scope>FUNCTION IN SUMOYLATION OF PML</scope>
    <scope>INTERACTION WITH HIPK2; SP100; PML; DAXX; CBX4; PIAS1; UBE2I AND PML-RARALPHA ONCOPROTEIN</scope>
    <scope>IDENTIFICATION IN COMPLEX WITH SAE2</scope>
</reference>
<reference key="2">
    <citation type="journal article" date="2001" name="Nature">
        <title>The DNA sequence and comparative analysis of human chromosome 20.</title>
        <authorList>
            <person name="Deloukas P."/>
            <person name="Matthews L.H."/>
            <person name="Ashurst J.L."/>
            <person name="Burton J."/>
            <person name="Gilbert J.G.R."/>
            <person name="Jones M."/>
            <person name="Stavrides G."/>
            <person name="Almeida J.P."/>
            <person name="Babbage A.K."/>
            <person name="Bagguley C.L."/>
            <person name="Bailey J."/>
            <person name="Barlow K.F."/>
            <person name="Bates K.N."/>
            <person name="Beard L.M."/>
            <person name="Beare D.M."/>
            <person name="Beasley O.P."/>
            <person name="Bird C.P."/>
            <person name="Blakey S.E."/>
            <person name="Bridgeman A.M."/>
            <person name="Brown A.J."/>
            <person name="Buck D."/>
            <person name="Burrill W.D."/>
            <person name="Butler A.P."/>
            <person name="Carder C."/>
            <person name="Carter N.P."/>
            <person name="Chapman J.C."/>
            <person name="Clamp M."/>
            <person name="Clark G."/>
            <person name="Clark L.N."/>
            <person name="Clark S.Y."/>
            <person name="Clee C.M."/>
            <person name="Clegg S."/>
            <person name="Cobley V.E."/>
            <person name="Collier R.E."/>
            <person name="Connor R.E."/>
            <person name="Corby N.R."/>
            <person name="Coulson A."/>
            <person name="Coville G.J."/>
            <person name="Deadman R."/>
            <person name="Dhami P.D."/>
            <person name="Dunn M."/>
            <person name="Ellington A.G."/>
            <person name="Frankland J.A."/>
            <person name="Fraser A."/>
            <person name="French L."/>
            <person name="Garner P."/>
            <person name="Grafham D.V."/>
            <person name="Griffiths C."/>
            <person name="Griffiths M.N.D."/>
            <person name="Gwilliam R."/>
            <person name="Hall R.E."/>
            <person name="Hammond S."/>
            <person name="Harley J.L."/>
            <person name="Heath P.D."/>
            <person name="Ho S."/>
            <person name="Holden J.L."/>
            <person name="Howden P.J."/>
            <person name="Huckle E."/>
            <person name="Hunt A.R."/>
            <person name="Hunt S.E."/>
            <person name="Jekosch K."/>
            <person name="Johnson C.M."/>
            <person name="Johnson D."/>
            <person name="Kay M.P."/>
            <person name="Kimberley A.M."/>
            <person name="King A."/>
            <person name="Knights A."/>
            <person name="Laird G.K."/>
            <person name="Lawlor S."/>
            <person name="Lehvaeslaiho M.H."/>
            <person name="Leversha M.A."/>
            <person name="Lloyd C."/>
            <person name="Lloyd D.M."/>
            <person name="Lovell J.D."/>
            <person name="Marsh V.L."/>
            <person name="Martin S.L."/>
            <person name="McConnachie L.J."/>
            <person name="McLay K."/>
            <person name="McMurray A.A."/>
            <person name="Milne S.A."/>
            <person name="Mistry D."/>
            <person name="Moore M.J.F."/>
            <person name="Mullikin J.C."/>
            <person name="Nickerson T."/>
            <person name="Oliver K."/>
            <person name="Parker A."/>
            <person name="Patel R."/>
            <person name="Pearce T.A.V."/>
            <person name="Peck A.I."/>
            <person name="Phillimore B.J.C.T."/>
            <person name="Prathalingam S.R."/>
            <person name="Plumb R.W."/>
            <person name="Ramsay H."/>
            <person name="Rice C.M."/>
            <person name="Ross M.T."/>
            <person name="Scott C.E."/>
            <person name="Sehra H.K."/>
            <person name="Shownkeen R."/>
            <person name="Sims S."/>
            <person name="Skuce C.D."/>
            <person name="Smith M.L."/>
            <person name="Soderlund C."/>
            <person name="Steward C.A."/>
            <person name="Sulston J.E."/>
            <person name="Swann R.M."/>
            <person name="Sycamore N."/>
            <person name="Taylor R."/>
            <person name="Tee L."/>
            <person name="Thomas D.W."/>
            <person name="Thorpe A."/>
            <person name="Tracey A."/>
            <person name="Tromans A.C."/>
            <person name="Vaudin M."/>
            <person name="Wall M."/>
            <person name="Wallis J.M."/>
            <person name="Whitehead S.L."/>
            <person name="Whittaker P."/>
            <person name="Willey D.L."/>
            <person name="Williams L."/>
            <person name="Williams S.A."/>
            <person name="Wilming L."/>
            <person name="Wray P.W."/>
            <person name="Hubbard T."/>
            <person name="Durbin R.M."/>
            <person name="Bentley D.R."/>
            <person name="Beck S."/>
            <person name="Rogers J."/>
        </authorList>
    </citation>
    <scope>NUCLEOTIDE SEQUENCE [LARGE SCALE GENOMIC DNA]</scope>
</reference>
<reference key="3">
    <citation type="journal article" date="2019" name="ChemBioChem">
        <title>Modulating protein-protein interactions with visible-light responsive peptide backbone photoswitches.</title>
        <authorList>
            <person name="Albert L."/>
            <person name="Penalver A."/>
            <person name="Djokovic N."/>
            <person name="Werel L."/>
            <person name="Hoffarth M."/>
            <person name="Ruzic D."/>
            <person name="Xu J."/>
            <person name="Essen L.O."/>
            <person name="Nikolic K."/>
            <person name="Dou Y."/>
            <person name="Vazquez O."/>
        </authorList>
    </citation>
    <scope>X-RAY CRYSTALLOGRAPHY (1.51 ANGSTROMS) OF 5-8</scope>
</reference>
<evidence type="ECO:0000250" key="1">
    <source>
        <dbReference type="UniProtKB" id="P63165"/>
    </source>
</evidence>
<evidence type="ECO:0000255" key="2">
    <source>
        <dbReference type="PROSITE-ProRule" id="PRU00214"/>
    </source>
</evidence>
<evidence type="ECO:0000269" key="3">
    <source>
    </source>
</evidence>
<evidence type="ECO:0000303" key="4">
    <source>
    </source>
</evidence>
<evidence type="ECO:0000305" key="5"/>
<evidence type="ECO:0000312" key="6">
    <source>
        <dbReference type="HGNC" id="HGNC:33148"/>
    </source>
</evidence>
<name>SUMO5_HUMAN</name>